<dbReference type="EMBL" id="AF095687">
    <property type="protein sequence ID" value="AAC96312.1"/>
    <property type="molecule type" value="mRNA"/>
</dbReference>
<dbReference type="EMBL" id="AF191492">
    <property type="protein sequence ID" value="AAG28385.1"/>
    <property type="molecule type" value="mRNA"/>
</dbReference>
<dbReference type="EMBL" id="AK024176">
    <property type="protein sequence ID" value="BAG51268.1"/>
    <property type="molecule type" value="mRNA"/>
</dbReference>
<dbReference type="EMBL" id="CH236947">
    <property type="protein sequence ID" value="EAL24317.1"/>
    <property type="molecule type" value="Genomic_DNA"/>
</dbReference>
<dbReference type="EMBL" id="BC093748">
    <property type="status" value="NOT_ANNOTATED_CDS"/>
    <property type="molecule type" value="mRNA"/>
</dbReference>
<dbReference type="EMBL" id="BC112141">
    <property type="status" value="NOT_ANNOTATED_CDS"/>
    <property type="molecule type" value="mRNA"/>
</dbReference>
<dbReference type="BioMuta" id="HGNC:24158"/>
<dbReference type="AGR" id="HGNC:24158"/>
<dbReference type="GeneCards" id="SND1-IT1"/>
<dbReference type="HGNC" id="HGNC:24158">
    <property type="gene designation" value="SND1-IT1"/>
</dbReference>
<dbReference type="neXtProt" id="NX_Q9HBX3"/>
<dbReference type="InParanoid" id="Q9HBX3"/>
<dbReference type="PAN-GO" id="Q9HBX3">
    <property type="GO annotations" value="0 GO annotations based on evolutionary models"/>
</dbReference>
<dbReference type="PathwayCommons" id="Q9HBX3"/>
<dbReference type="Pharos" id="Q9HBX3">
    <property type="development level" value="Tdark"/>
</dbReference>
<dbReference type="PRO" id="PR:Q9HBX3"/>
<dbReference type="Proteomes" id="UP000005640">
    <property type="component" value="Unplaced"/>
</dbReference>
<dbReference type="RNAct" id="Q9HBX3">
    <property type="molecule type" value="protein"/>
</dbReference>
<gene>
    <name type="primary">SND1-IT1</name>
    <name type="synonym">C7orf54</name>
    <name type="synonym">NAG8</name>
</gene>
<reference key="1">
    <citation type="submission" date="1999-10" db="EMBL/GenBank/DDBJ databases">
        <title>Cloning of a new gene related to nasopharyngeal carcinoma at 7q31.</title>
        <authorList>
            <person name="Bin L.H."/>
            <person name="Yang J.B."/>
            <person name="Li G.Y."/>
        </authorList>
    </citation>
    <scope>NUCLEOTIDE SEQUENCE [MRNA]</scope>
    <source>
        <tissue>Brain</tissue>
    </source>
</reference>
<reference key="2">
    <citation type="journal article" date="2004" name="Nat. Genet.">
        <title>Complete sequencing and characterization of 21,243 full-length human cDNAs.</title>
        <authorList>
            <person name="Ota T."/>
            <person name="Suzuki Y."/>
            <person name="Nishikawa T."/>
            <person name="Otsuki T."/>
            <person name="Sugiyama T."/>
            <person name="Irie R."/>
            <person name="Wakamatsu A."/>
            <person name="Hayashi K."/>
            <person name="Sato H."/>
            <person name="Nagai K."/>
            <person name="Kimura K."/>
            <person name="Makita H."/>
            <person name="Sekine M."/>
            <person name="Obayashi M."/>
            <person name="Nishi T."/>
            <person name="Shibahara T."/>
            <person name="Tanaka T."/>
            <person name="Ishii S."/>
            <person name="Yamamoto J."/>
            <person name="Saito K."/>
            <person name="Kawai Y."/>
            <person name="Isono Y."/>
            <person name="Nakamura Y."/>
            <person name="Nagahari K."/>
            <person name="Murakami K."/>
            <person name="Yasuda T."/>
            <person name="Iwayanagi T."/>
            <person name="Wagatsuma M."/>
            <person name="Shiratori A."/>
            <person name="Sudo H."/>
            <person name="Hosoiri T."/>
            <person name="Kaku Y."/>
            <person name="Kodaira H."/>
            <person name="Kondo H."/>
            <person name="Sugawara M."/>
            <person name="Takahashi M."/>
            <person name="Kanda K."/>
            <person name="Yokoi T."/>
            <person name="Furuya T."/>
            <person name="Kikkawa E."/>
            <person name="Omura Y."/>
            <person name="Abe K."/>
            <person name="Kamihara K."/>
            <person name="Katsuta N."/>
            <person name="Sato K."/>
            <person name="Tanikawa M."/>
            <person name="Yamazaki M."/>
            <person name="Ninomiya K."/>
            <person name="Ishibashi T."/>
            <person name="Yamashita H."/>
            <person name="Murakawa K."/>
            <person name="Fujimori K."/>
            <person name="Tanai H."/>
            <person name="Kimata M."/>
            <person name="Watanabe M."/>
            <person name="Hiraoka S."/>
            <person name="Chiba Y."/>
            <person name="Ishida S."/>
            <person name="Ono Y."/>
            <person name="Takiguchi S."/>
            <person name="Watanabe S."/>
            <person name="Yosida M."/>
            <person name="Hotuta T."/>
            <person name="Kusano J."/>
            <person name="Kanehori K."/>
            <person name="Takahashi-Fujii A."/>
            <person name="Hara H."/>
            <person name="Tanase T.-O."/>
            <person name="Nomura Y."/>
            <person name="Togiya S."/>
            <person name="Komai F."/>
            <person name="Hara R."/>
            <person name="Takeuchi K."/>
            <person name="Arita M."/>
            <person name="Imose N."/>
            <person name="Musashino K."/>
            <person name="Yuuki H."/>
            <person name="Oshima A."/>
            <person name="Sasaki N."/>
            <person name="Aotsuka S."/>
            <person name="Yoshikawa Y."/>
            <person name="Matsunawa H."/>
            <person name="Ichihara T."/>
            <person name="Shiohata N."/>
            <person name="Sano S."/>
            <person name="Moriya S."/>
            <person name="Momiyama H."/>
            <person name="Satoh N."/>
            <person name="Takami S."/>
            <person name="Terashima Y."/>
            <person name="Suzuki O."/>
            <person name="Nakagawa S."/>
            <person name="Senoh A."/>
            <person name="Mizoguchi H."/>
            <person name="Goto Y."/>
            <person name="Shimizu F."/>
            <person name="Wakebe H."/>
            <person name="Hishigaki H."/>
            <person name="Watanabe T."/>
            <person name="Sugiyama A."/>
            <person name="Takemoto M."/>
            <person name="Kawakami B."/>
            <person name="Yamazaki M."/>
            <person name="Watanabe K."/>
            <person name="Kumagai A."/>
            <person name="Itakura S."/>
            <person name="Fukuzumi Y."/>
            <person name="Fujimori Y."/>
            <person name="Komiyama M."/>
            <person name="Tashiro H."/>
            <person name="Tanigami A."/>
            <person name="Fujiwara T."/>
            <person name="Ono T."/>
            <person name="Yamada K."/>
            <person name="Fujii Y."/>
            <person name="Ozaki K."/>
            <person name="Hirao M."/>
            <person name="Ohmori Y."/>
            <person name="Kawabata A."/>
            <person name="Hikiji T."/>
            <person name="Kobatake N."/>
            <person name="Inagaki H."/>
            <person name="Ikema Y."/>
            <person name="Okamoto S."/>
            <person name="Okitani R."/>
            <person name="Kawakami T."/>
            <person name="Noguchi S."/>
            <person name="Itoh T."/>
            <person name="Shigeta K."/>
            <person name="Senba T."/>
            <person name="Matsumura K."/>
            <person name="Nakajima Y."/>
            <person name="Mizuno T."/>
            <person name="Morinaga M."/>
            <person name="Sasaki M."/>
            <person name="Togashi T."/>
            <person name="Oyama M."/>
            <person name="Hata H."/>
            <person name="Watanabe M."/>
            <person name="Komatsu T."/>
            <person name="Mizushima-Sugano J."/>
            <person name="Satoh T."/>
            <person name="Shirai Y."/>
            <person name="Takahashi Y."/>
            <person name="Nakagawa K."/>
            <person name="Okumura K."/>
            <person name="Nagase T."/>
            <person name="Nomura N."/>
            <person name="Kikuchi H."/>
            <person name="Masuho Y."/>
            <person name="Yamashita R."/>
            <person name="Nakai K."/>
            <person name="Yada T."/>
            <person name="Nakamura Y."/>
            <person name="Ohara O."/>
            <person name="Isogai T."/>
            <person name="Sugano S."/>
        </authorList>
    </citation>
    <scope>NUCLEOTIDE SEQUENCE [LARGE SCALE MRNA]</scope>
    <source>
        <tissue>Mammary gland</tissue>
    </source>
</reference>
<reference key="3">
    <citation type="journal article" date="2003" name="Science">
        <title>Human chromosome 7: DNA sequence and biology.</title>
        <authorList>
            <person name="Scherer S.W."/>
            <person name="Cheung J."/>
            <person name="MacDonald J.R."/>
            <person name="Osborne L.R."/>
            <person name="Nakabayashi K."/>
            <person name="Herbrick J.-A."/>
            <person name="Carson A.R."/>
            <person name="Parker-Katiraee L."/>
            <person name="Skaug J."/>
            <person name="Khaja R."/>
            <person name="Zhang J."/>
            <person name="Hudek A.K."/>
            <person name="Li M."/>
            <person name="Haddad M."/>
            <person name="Duggan G.E."/>
            <person name="Fernandez B.A."/>
            <person name="Kanematsu E."/>
            <person name="Gentles S."/>
            <person name="Christopoulos C.C."/>
            <person name="Choufani S."/>
            <person name="Kwasnicka D."/>
            <person name="Zheng X.H."/>
            <person name="Lai Z."/>
            <person name="Nusskern D.R."/>
            <person name="Zhang Q."/>
            <person name="Gu Z."/>
            <person name="Lu F."/>
            <person name="Zeesman S."/>
            <person name="Nowaczyk M.J."/>
            <person name="Teshima I."/>
            <person name="Chitayat D."/>
            <person name="Shuman C."/>
            <person name="Weksberg R."/>
            <person name="Zackai E.H."/>
            <person name="Grebe T.A."/>
            <person name="Cox S.R."/>
            <person name="Kirkpatrick S.J."/>
            <person name="Rahman N."/>
            <person name="Friedman J.M."/>
            <person name="Heng H.H.Q."/>
            <person name="Pelicci P.G."/>
            <person name="Lo-Coco F."/>
            <person name="Belloni E."/>
            <person name="Shaffer L.G."/>
            <person name="Pober B."/>
            <person name="Morton C.C."/>
            <person name="Gusella J.F."/>
            <person name="Bruns G.A.P."/>
            <person name="Korf B.R."/>
            <person name="Quade B.J."/>
            <person name="Ligon A.H."/>
            <person name="Ferguson H."/>
            <person name="Higgins A.W."/>
            <person name="Leach N.T."/>
            <person name="Herrick S.R."/>
            <person name="Lemyre E."/>
            <person name="Farra C.G."/>
            <person name="Kim H.-G."/>
            <person name="Summers A.M."/>
            <person name="Gripp K.W."/>
            <person name="Roberts W."/>
            <person name="Szatmari P."/>
            <person name="Winsor E.J.T."/>
            <person name="Grzeschik K.-H."/>
            <person name="Teebi A."/>
            <person name="Minassian B.A."/>
            <person name="Kere J."/>
            <person name="Armengol L."/>
            <person name="Pujana M.A."/>
            <person name="Estivill X."/>
            <person name="Wilson M.D."/>
            <person name="Koop B.F."/>
            <person name="Tosi S."/>
            <person name="Moore G.E."/>
            <person name="Boright A.P."/>
            <person name="Zlotorynski E."/>
            <person name="Kerem B."/>
            <person name="Kroisel P.M."/>
            <person name="Petek E."/>
            <person name="Oscier D.G."/>
            <person name="Mould S.J."/>
            <person name="Doehner H."/>
            <person name="Doehner K."/>
            <person name="Rommens J.M."/>
            <person name="Vincent J.B."/>
            <person name="Venter J.C."/>
            <person name="Li P.W."/>
            <person name="Mural R.J."/>
            <person name="Adams M.D."/>
            <person name="Tsui L.-C."/>
        </authorList>
    </citation>
    <scope>NUCLEOTIDE SEQUENCE [LARGE SCALE GENOMIC DNA]</scope>
</reference>
<reference key="4">
    <citation type="journal article" date="2004" name="Genome Res.">
        <title>The status, quality, and expansion of the NIH full-length cDNA project: the Mammalian Gene Collection (MGC).</title>
        <authorList>
            <consortium name="The MGC Project Team"/>
        </authorList>
    </citation>
    <scope>NUCLEOTIDE SEQUENCE [LARGE SCALE MRNA]</scope>
    <source>
        <tissue>Brain</tissue>
    </source>
</reference>
<keyword id="KW-1185">Reference proteome</keyword>
<proteinExistence type="predicted"/>
<sequence>MSHHPHSLRNSCLIRMDLLYWQFTIYTITFCFSHLSGRLTLSAQHISHRPCLLSYSLLFWKVHHLFLEGFPCSPRLDEMSFHQFPQHPVHVSVVHLPIVYKGSMTQVSPH</sequence>
<name>SNIT1_HUMAN</name>
<protein>
    <recommendedName>
        <fullName>Uncharacterized protein encoded by SND1-IT1</fullName>
    </recommendedName>
    <alternativeName>
        <fullName>Brain and nasopharyngeal carcinoma susceptibility protein NSG-x</fullName>
    </alternativeName>
    <alternativeName>
        <fullName>Nasopharyngeal carcinoma-associated gene 8 protein</fullName>
    </alternativeName>
    <alternativeName>
        <fullName>SND1 intronic transcript 1</fullName>
    </alternativeName>
</protein>
<feature type="chain" id="PRO_0000340264" description="Uncharacterized protein encoded by SND1-IT1">
    <location>
        <begin position="1"/>
        <end position="110"/>
    </location>
</feature>
<feature type="sequence variant" id="VAR_050818" description="In dbSNP:rs17151639.">
    <original>T</original>
    <variation>A</variation>
    <location>
        <position position="24"/>
    </location>
</feature>
<organism>
    <name type="scientific">Homo sapiens</name>
    <name type="common">Human</name>
    <dbReference type="NCBI Taxonomy" id="9606"/>
    <lineage>
        <taxon>Eukaryota</taxon>
        <taxon>Metazoa</taxon>
        <taxon>Chordata</taxon>
        <taxon>Craniata</taxon>
        <taxon>Vertebrata</taxon>
        <taxon>Euteleostomi</taxon>
        <taxon>Mammalia</taxon>
        <taxon>Eutheria</taxon>
        <taxon>Euarchontoglires</taxon>
        <taxon>Primates</taxon>
        <taxon>Haplorrhini</taxon>
        <taxon>Catarrhini</taxon>
        <taxon>Hominidae</taxon>
        <taxon>Homo</taxon>
    </lineage>
</organism>
<accession>Q9HBX3</accession>
<accession>B3KNA6</accession>
<accession>O95358</accession>